<name>IPYR_BUCAP</name>
<accession>Q8KA31</accession>
<proteinExistence type="inferred from homology"/>
<sequence length="180" mass="20510">MNLNLIKAGNNIPSDIYVIIEISSNSSPIKYEVDKQSGVLFVDRFIPTPMFYPCNYGYINETLSLDGDPLDVLVPSPYPIQSNVVINCKPVGILKMHDESGNDAKIIAVPNDKVSKEYENINDISDISELLKKQISHFFQYYKTLEKEKWVEIIGWGDHHEAKLEIKNSYDRAKKNTSLK</sequence>
<comment type="function">
    <text evidence="1">Catalyzes the hydrolysis of inorganic pyrophosphate (PPi) forming two phosphate ions.</text>
</comment>
<comment type="catalytic activity">
    <reaction evidence="1">
        <text>diphosphate + H2O = 2 phosphate + H(+)</text>
        <dbReference type="Rhea" id="RHEA:24576"/>
        <dbReference type="ChEBI" id="CHEBI:15377"/>
        <dbReference type="ChEBI" id="CHEBI:15378"/>
        <dbReference type="ChEBI" id="CHEBI:33019"/>
        <dbReference type="ChEBI" id="CHEBI:43474"/>
        <dbReference type="EC" id="3.6.1.1"/>
    </reaction>
</comment>
<comment type="cofactor">
    <cofactor evidence="1">
        <name>Mg(2+)</name>
        <dbReference type="ChEBI" id="CHEBI:18420"/>
    </cofactor>
</comment>
<comment type="subunit">
    <text evidence="1">Homohexamer.</text>
</comment>
<comment type="subcellular location">
    <subcellularLocation>
        <location evidence="1">Cytoplasm</location>
    </subcellularLocation>
</comment>
<comment type="similarity">
    <text evidence="1">Belongs to the PPase family.</text>
</comment>
<reference key="1">
    <citation type="journal article" date="2002" name="Science">
        <title>50 million years of genomic stasis in endosymbiotic bacteria.</title>
        <authorList>
            <person name="Tamas I."/>
            <person name="Klasson L."/>
            <person name="Canbaeck B."/>
            <person name="Naeslund A.K."/>
            <person name="Eriksson A.-S."/>
            <person name="Wernegreen J.J."/>
            <person name="Sandstroem J.P."/>
            <person name="Moran N.A."/>
            <person name="Andersson S.G.E."/>
        </authorList>
    </citation>
    <scope>NUCLEOTIDE SEQUENCE [LARGE SCALE GENOMIC DNA]</scope>
    <source>
        <strain>Sg</strain>
    </source>
</reference>
<keyword id="KW-0963">Cytoplasm</keyword>
<keyword id="KW-0378">Hydrolase</keyword>
<keyword id="KW-0460">Magnesium</keyword>
<keyword id="KW-0479">Metal-binding</keyword>
<dbReference type="EC" id="3.6.1.1" evidence="1"/>
<dbReference type="EMBL" id="AE013218">
    <property type="protein sequence ID" value="AAM67651.1"/>
    <property type="molecule type" value="Genomic_DNA"/>
</dbReference>
<dbReference type="RefSeq" id="WP_011053617.1">
    <property type="nucleotide sequence ID" value="NC_004061.1"/>
</dbReference>
<dbReference type="SMR" id="Q8KA31"/>
<dbReference type="STRING" id="198804.BUsg_081"/>
<dbReference type="GeneID" id="93003549"/>
<dbReference type="KEGG" id="bas:BUsg_081"/>
<dbReference type="eggNOG" id="COG0221">
    <property type="taxonomic scope" value="Bacteria"/>
</dbReference>
<dbReference type="HOGENOM" id="CLU_073198_1_0_6"/>
<dbReference type="Proteomes" id="UP000000416">
    <property type="component" value="Chromosome"/>
</dbReference>
<dbReference type="GO" id="GO:0005737">
    <property type="term" value="C:cytoplasm"/>
    <property type="evidence" value="ECO:0007669"/>
    <property type="project" value="UniProtKB-SubCell"/>
</dbReference>
<dbReference type="GO" id="GO:0004427">
    <property type="term" value="F:inorganic diphosphate phosphatase activity"/>
    <property type="evidence" value="ECO:0007669"/>
    <property type="project" value="UniProtKB-UniRule"/>
</dbReference>
<dbReference type="GO" id="GO:0000287">
    <property type="term" value="F:magnesium ion binding"/>
    <property type="evidence" value="ECO:0007669"/>
    <property type="project" value="UniProtKB-UniRule"/>
</dbReference>
<dbReference type="GO" id="GO:0006796">
    <property type="term" value="P:phosphate-containing compound metabolic process"/>
    <property type="evidence" value="ECO:0007669"/>
    <property type="project" value="InterPro"/>
</dbReference>
<dbReference type="CDD" id="cd00412">
    <property type="entry name" value="pyrophosphatase"/>
    <property type="match status" value="1"/>
</dbReference>
<dbReference type="FunFam" id="3.90.80.10:FF:000001">
    <property type="entry name" value="Inorganic pyrophosphatase"/>
    <property type="match status" value="1"/>
</dbReference>
<dbReference type="Gene3D" id="3.90.80.10">
    <property type="entry name" value="Inorganic pyrophosphatase"/>
    <property type="match status" value="1"/>
</dbReference>
<dbReference type="HAMAP" id="MF_00209">
    <property type="entry name" value="Inorganic_PPase"/>
    <property type="match status" value="1"/>
</dbReference>
<dbReference type="InterPro" id="IPR008162">
    <property type="entry name" value="Pyrophosphatase"/>
</dbReference>
<dbReference type="InterPro" id="IPR036649">
    <property type="entry name" value="Pyrophosphatase_sf"/>
</dbReference>
<dbReference type="NCBIfam" id="NF002317">
    <property type="entry name" value="PRK01250.1"/>
    <property type="match status" value="1"/>
</dbReference>
<dbReference type="PANTHER" id="PTHR10286">
    <property type="entry name" value="INORGANIC PYROPHOSPHATASE"/>
    <property type="match status" value="1"/>
</dbReference>
<dbReference type="Pfam" id="PF00719">
    <property type="entry name" value="Pyrophosphatase"/>
    <property type="match status" value="1"/>
</dbReference>
<dbReference type="SUPFAM" id="SSF50324">
    <property type="entry name" value="Inorganic pyrophosphatase"/>
    <property type="match status" value="1"/>
</dbReference>
<dbReference type="PROSITE" id="PS00387">
    <property type="entry name" value="PPASE"/>
    <property type="match status" value="1"/>
</dbReference>
<feature type="chain" id="PRO_0000137485" description="Inorganic pyrophosphatase">
    <location>
        <begin position="1"/>
        <end position="180"/>
    </location>
</feature>
<feature type="binding site" evidence="1">
    <location>
        <position position="30"/>
    </location>
    <ligand>
        <name>substrate</name>
    </ligand>
</feature>
<feature type="binding site" evidence="1">
    <location>
        <position position="44"/>
    </location>
    <ligand>
        <name>substrate</name>
    </ligand>
</feature>
<feature type="binding site" evidence="1">
    <location>
        <position position="56"/>
    </location>
    <ligand>
        <name>substrate</name>
    </ligand>
</feature>
<feature type="binding site" evidence="1">
    <location>
        <position position="66"/>
    </location>
    <ligand>
        <name>Mg(2+)</name>
        <dbReference type="ChEBI" id="CHEBI:18420"/>
        <label>1</label>
    </ligand>
</feature>
<feature type="binding site" evidence="1">
    <location>
        <position position="71"/>
    </location>
    <ligand>
        <name>Mg(2+)</name>
        <dbReference type="ChEBI" id="CHEBI:18420"/>
        <label>1</label>
    </ligand>
</feature>
<feature type="binding site" evidence="1">
    <location>
        <position position="71"/>
    </location>
    <ligand>
        <name>Mg(2+)</name>
        <dbReference type="ChEBI" id="CHEBI:18420"/>
        <label>2</label>
    </ligand>
</feature>
<feature type="binding site" evidence="1">
    <location>
        <position position="103"/>
    </location>
    <ligand>
        <name>Mg(2+)</name>
        <dbReference type="ChEBI" id="CHEBI:18420"/>
        <label>1</label>
    </ligand>
</feature>
<feature type="binding site" evidence="1">
    <location>
        <position position="142"/>
    </location>
    <ligand>
        <name>substrate</name>
    </ligand>
</feature>
<gene>
    <name evidence="1" type="primary">ppa</name>
    <name type="ordered locus">BUsg_081</name>
</gene>
<protein>
    <recommendedName>
        <fullName evidence="1">Inorganic pyrophosphatase</fullName>
        <ecNumber evidence="1">3.6.1.1</ecNumber>
    </recommendedName>
    <alternativeName>
        <fullName evidence="1">Pyrophosphate phospho-hydrolase</fullName>
        <shortName evidence="1">PPase</shortName>
    </alternativeName>
</protein>
<evidence type="ECO:0000255" key="1">
    <source>
        <dbReference type="HAMAP-Rule" id="MF_00209"/>
    </source>
</evidence>
<organism>
    <name type="scientific">Buchnera aphidicola subsp. Schizaphis graminum (strain Sg)</name>
    <dbReference type="NCBI Taxonomy" id="198804"/>
    <lineage>
        <taxon>Bacteria</taxon>
        <taxon>Pseudomonadati</taxon>
        <taxon>Pseudomonadota</taxon>
        <taxon>Gammaproteobacteria</taxon>
        <taxon>Enterobacterales</taxon>
        <taxon>Erwiniaceae</taxon>
        <taxon>Buchnera</taxon>
    </lineage>
</organism>